<keyword id="KW-0119">Carbohydrate metabolism</keyword>
<keyword id="KW-0963">Cytoplasm</keyword>
<keyword id="KW-0294">Fucose metabolism</keyword>
<keyword id="KW-0413">Isomerase</keyword>
<keyword id="KW-0464">Manganese</keyword>
<keyword id="KW-0479">Metal-binding</keyword>
<proteinExistence type="inferred from homology"/>
<feature type="chain" id="PRO_1000067221" description="L-fucose isomerase">
    <location>
        <begin position="1"/>
        <end position="589"/>
    </location>
</feature>
<feature type="active site" description="Proton acceptor" evidence="1">
    <location>
        <position position="340"/>
    </location>
</feature>
<feature type="active site" description="Proton acceptor" evidence="1">
    <location>
        <position position="364"/>
    </location>
</feature>
<feature type="binding site" evidence="1">
    <location>
        <position position="340"/>
    </location>
    <ligand>
        <name>Mn(2+)</name>
        <dbReference type="ChEBI" id="CHEBI:29035"/>
    </ligand>
</feature>
<feature type="binding site" evidence="1">
    <location>
        <position position="364"/>
    </location>
    <ligand>
        <name>Mn(2+)</name>
        <dbReference type="ChEBI" id="CHEBI:29035"/>
    </ligand>
</feature>
<feature type="binding site" evidence="1">
    <location>
        <position position="527"/>
    </location>
    <ligand>
        <name>Mn(2+)</name>
        <dbReference type="ChEBI" id="CHEBI:29035"/>
    </ligand>
</feature>
<evidence type="ECO:0000255" key="1">
    <source>
        <dbReference type="HAMAP-Rule" id="MF_01254"/>
    </source>
</evidence>
<sequence length="589" mass="65475">MALATQSNRIKIGIRPTIDGRRMGVRESLETQTIRMAQSVAQLLQTHIRYTDSTFVECVVADSTIGGVAEAAACADKFKRENVGLTITVTPCWCYGSETIDMDPHMPKAIWGFNGTERPGAVYLAAALAGHSQLGLPAFSIYGTEVQEADDTNIPEDVKEKLLRFARAGLAVASIRGKSYLSIGSVSMGIAGSIVNQAFFQEYLGMRNEYVDMMEIKRRLDRKIYDQEEVDLALSWVKQYCKEGVDVNSLENQRNAEERAELWENVVKMTIITRDLMVGNPKLATLNYAEEALGHNAIAAGFQGQRHWTDHLPNGDFMEAMLNSTYDWNGVRPPYILATENDSLNAIGMLFGHQLTGKAQIFADVRTYWSQDSVERVTGWRPESGFIHLINSGSAALDGTGEHQDAQGNPTLKPAWDVTEEEAKRCLENTRWCPAVHEYFRGGGLSSQFLTKGGIPFTMHRINLIKGLGPVLQIAEGWSIDLPQDVHNKLNQRTNETWPTTWFVPRLTGKGAFTDVYSVMANWGANHCVATHGHVGADLITLASMLRIPVCMHNVSEKNIFRPSAWNGFGQDKEGQDYRACQNFGPLYK</sequence>
<dbReference type="EC" id="5.3.1.25" evidence="1"/>
<dbReference type="EMBL" id="CP000671">
    <property type="protein sequence ID" value="ABQ97879.1"/>
    <property type="molecule type" value="Genomic_DNA"/>
</dbReference>
<dbReference type="SMR" id="A5UAS8"/>
<dbReference type="KEGG" id="hip:CGSHiEE_02050"/>
<dbReference type="HOGENOM" id="CLU_033326_1_0_6"/>
<dbReference type="UniPathway" id="UPA00563">
    <property type="reaction ID" value="UER00624"/>
</dbReference>
<dbReference type="GO" id="GO:0005737">
    <property type="term" value="C:cytoplasm"/>
    <property type="evidence" value="ECO:0007669"/>
    <property type="project" value="UniProtKB-SubCell"/>
</dbReference>
<dbReference type="GO" id="GO:0008790">
    <property type="term" value="F:arabinose isomerase activity"/>
    <property type="evidence" value="ECO:0007669"/>
    <property type="project" value="TreeGrafter"/>
</dbReference>
<dbReference type="GO" id="GO:0008736">
    <property type="term" value="F:L-fucose isomerase activity"/>
    <property type="evidence" value="ECO:0007669"/>
    <property type="project" value="UniProtKB-UniRule"/>
</dbReference>
<dbReference type="GO" id="GO:0030145">
    <property type="term" value="F:manganese ion binding"/>
    <property type="evidence" value="ECO:0007669"/>
    <property type="project" value="UniProtKB-UniRule"/>
</dbReference>
<dbReference type="GO" id="GO:0019571">
    <property type="term" value="P:D-arabinose catabolic process"/>
    <property type="evidence" value="ECO:0007669"/>
    <property type="project" value="TreeGrafter"/>
</dbReference>
<dbReference type="GO" id="GO:0042355">
    <property type="term" value="P:L-fucose catabolic process"/>
    <property type="evidence" value="ECO:0007669"/>
    <property type="project" value="UniProtKB-UniRule"/>
</dbReference>
<dbReference type="FunFam" id="3.20.14.10:FF:000001">
    <property type="entry name" value="L-fucose isomerase"/>
    <property type="match status" value="1"/>
</dbReference>
<dbReference type="FunFam" id="3.40.50.1070:FF:000001">
    <property type="entry name" value="L-fucose isomerase"/>
    <property type="match status" value="1"/>
</dbReference>
<dbReference type="Gene3D" id="3.40.50.1070">
    <property type="match status" value="1"/>
</dbReference>
<dbReference type="Gene3D" id="3.40.275.10">
    <property type="entry name" value="L-fucose Isomerase, Chain A, domain 2"/>
    <property type="match status" value="1"/>
</dbReference>
<dbReference type="Gene3D" id="3.20.14.10">
    <property type="entry name" value="L-fucose/L-arabinose isomerase, C-terminal"/>
    <property type="match status" value="1"/>
</dbReference>
<dbReference type="HAMAP" id="MF_01254">
    <property type="entry name" value="Fucose_iso"/>
    <property type="match status" value="1"/>
</dbReference>
<dbReference type="InterPro" id="IPR004216">
    <property type="entry name" value="Fuc/Ara_isomerase_C"/>
</dbReference>
<dbReference type="InterPro" id="IPR038393">
    <property type="entry name" value="Fuc_iso_dom3_sf"/>
</dbReference>
<dbReference type="InterPro" id="IPR015888">
    <property type="entry name" value="Fuc_isomerase_C"/>
</dbReference>
<dbReference type="InterPro" id="IPR038391">
    <property type="entry name" value="Fucose_iso_dom1_sf"/>
</dbReference>
<dbReference type="InterPro" id="IPR012888">
    <property type="entry name" value="Fucose_iso_N1"/>
</dbReference>
<dbReference type="InterPro" id="IPR005763">
    <property type="entry name" value="Fucose_isomerase"/>
</dbReference>
<dbReference type="InterPro" id="IPR038392">
    <property type="entry name" value="Fucose_isomerase_dom2_sf"/>
</dbReference>
<dbReference type="InterPro" id="IPR009015">
    <property type="entry name" value="Fucose_isomerase_N/cen_sf"/>
</dbReference>
<dbReference type="InterPro" id="IPR012889">
    <property type="entry name" value="Fucose_isomerase_N2"/>
</dbReference>
<dbReference type="NCBIfam" id="TIGR01089">
    <property type="entry name" value="fucI"/>
    <property type="match status" value="1"/>
</dbReference>
<dbReference type="NCBIfam" id="NF008220">
    <property type="entry name" value="PRK10991.1"/>
    <property type="match status" value="1"/>
</dbReference>
<dbReference type="PANTHER" id="PTHR37840">
    <property type="entry name" value="L-FUCOSE ISOMERASE"/>
    <property type="match status" value="1"/>
</dbReference>
<dbReference type="PANTHER" id="PTHR37840:SF1">
    <property type="entry name" value="L-FUCOSE ISOMERASE"/>
    <property type="match status" value="1"/>
</dbReference>
<dbReference type="Pfam" id="PF02952">
    <property type="entry name" value="Fucose_iso_C"/>
    <property type="match status" value="1"/>
</dbReference>
<dbReference type="Pfam" id="PF07881">
    <property type="entry name" value="Fucose_iso_N1"/>
    <property type="match status" value="1"/>
</dbReference>
<dbReference type="Pfam" id="PF07882">
    <property type="entry name" value="Fucose_iso_N2"/>
    <property type="match status" value="1"/>
</dbReference>
<dbReference type="SUPFAM" id="SSF50443">
    <property type="entry name" value="FucI/AraA C-terminal domain-like"/>
    <property type="match status" value="1"/>
</dbReference>
<dbReference type="SUPFAM" id="SSF53743">
    <property type="entry name" value="FucI/AraA N-terminal and middle domains"/>
    <property type="match status" value="1"/>
</dbReference>
<comment type="function">
    <text evidence="1">Converts the aldose L-fucose into the corresponding ketose L-fuculose.</text>
</comment>
<comment type="catalytic activity">
    <reaction evidence="1">
        <text>L-fucose = L-fuculose</text>
        <dbReference type="Rhea" id="RHEA:17233"/>
        <dbReference type="ChEBI" id="CHEBI:2181"/>
        <dbReference type="ChEBI" id="CHEBI:17617"/>
        <dbReference type="EC" id="5.3.1.25"/>
    </reaction>
</comment>
<comment type="cofactor">
    <cofactor evidence="1">
        <name>Mn(2+)</name>
        <dbReference type="ChEBI" id="CHEBI:29035"/>
    </cofactor>
</comment>
<comment type="pathway">
    <text evidence="1">Carbohydrate degradation; L-fucose degradation; L-lactaldehyde and glycerone phosphate from L-fucose: step 1/3.</text>
</comment>
<comment type="subcellular location">
    <subcellularLocation>
        <location evidence="1">Cytoplasm</location>
    </subcellularLocation>
</comment>
<comment type="similarity">
    <text evidence="1">Belongs to the L-fucose isomerase family.</text>
</comment>
<gene>
    <name evidence="1" type="primary">fucI</name>
    <name type="ordered locus">CGSHiEE_02050</name>
</gene>
<organism>
    <name type="scientific">Haemophilus influenzae (strain PittEE)</name>
    <dbReference type="NCBI Taxonomy" id="374930"/>
    <lineage>
        <taxon>Bacteria</taxon>
        <taxon>Pseudomonadati</taxon>
        <taxon>Pseudomonadota</taxon>
        <taxon>Gammaproteobacteria</taxon>
        <taxon>Pasteurellales</taxon>
        <taxon>Pasteurellaceae</taxon>
        <taxon>Haemophilus</taxon>
    </lineage>
</organism>
<protein>
    <recommendedName>
        <fullName evidence="1">L-fucose isomerase</fullName>
        <ecNumber evidence="1">5.3.1.25</ecNumber>
    </recommendedName>
    <alternativeName>
        <fullName evidence="1">6-deoxy-L-galactose isomerase</fullName>
    </alternativeName>
    <alternativeName>
        <fullName>FucIase</fullName>
    </alternativeName>
</protein>
<reference key="1">
    <citation type="journal article" date="2007" name="Genome Biol.">
        <title>Characterization and modeling of the Haemophilus influenzae core and supragenomes based on the complete genomic sequences of Rd and 12 clinical nontypeable strains.</title>
        <authorList>
            <person name="Hogg J.S."/>
            <person name="Hu F.Z."/>
            <person name="Janto B."/>
            <person name="Boissy R."/>
            <person name="Hayes J."/>
            <person name="Keefe R."/>
            <person name="Post J.C."/>
            <person name="Ehrlich G.D."/>
        </authorList>
    </citation>
    <scope>NUCLEOTIDE SEQUENCE [LARGE SCALE GENOMIC DNA]</scope>
    <source>
        <strain>PittEE</strain>
    </source>
</reference>
<name>FUCI_HAEIE</name>
<accession>A5UAS8</accession>